<dbReference type="EC" id="2.1.1.177" evidence="1"/>
<dbReference type="EMBL" id="CP000243">
    <property type="protein sequence ID" value="ABE06138.1"/>
    <property type="molecule type" value="Genomic_DNA"/>
</dbReference>
<dbReference type="RefSeq" id="WP_000776104.1">
    <property type="nucleotide sequence ID" value="NZ_CP064825.1"/>
</dbReference>
<dbReference type="SMR" id="Q1RES6"/>
<dbReference type="GeneID" id="93776846"/>
<dbReference type="KEGG" id="eci:UTI89_C0638"/>
<dbReference type="HOGENOM" id="CLU_100552_1_0_6"/>
<dbReference type="Proteomes" id="UP000001952">
    <property type="component" value="Chromosome"/>
</dbReference>
<dbReference type="GO" id="GO:0005737">
    <property type="term" value="C:cytoplasm"/>
    <property type="evidence" value="ECO:0007669"/>
    <property type="project" value="UniProtKB-SubCell"/>
</dbReference>
<dbReference type="GO" id="GO:0070038">
    <property type="term" value="F:rRNA (pseudouridine-N3-)-methyltransferase activity"/>
    <property type="evidence" value="ECO:0007669"/>
    <property type="project" value="UniProtKB-UniRule"/>
</dbReference>
<dbReference type="CDD" id="cd18081">
    <property type="entry name" value="RlmH-like"/>
    <property type="match status" value="1"/>
</dbReference>
<dbReference type="FunFam" id="3.40.1280.10:FF:000004">
    <property type="entry name" value="Ribosomal RNA large subunit methyltransferase H"/>
    <property type="match status" value="1"/>
</dbReference>
<dbReference type="Gene3D" id="3.40.1280.10">
    <property type="match status" value="1"/>
</dbReference>
<dbReference type="HAMAP" id="MF_00658">
    <property type="entry name" value="23SrRNA_methyltr_H"/>
    <property type="match status" value="1"/>
</dbReference>
<dbReference type="InterPro" id="IPR029028">
    <property type="entry name" value="Alpha/beta_knot_MTases"/>
</dbReference>
<dbReference type="InterPro" id="IPR003742">
    <property type="entry name" value="RlmH-like"/>
</dbReference>
<dbReference type="InterPro" id="IPR029026">
    <property type="entry name" value="tRNA_m1G_MTases_N"/>
</dbReference>
<dbReference type="NCBIfam" id="NF000984">
    <property type="entry name" value="PRK00103.1-1"/>
    <property type="match status" value="1"/>
</dbReference>
<dbReference type="NCBIfam" id="NF000986">
    <property type="entry name" value="PRK00103.1-4"/>
    <property type="match status" value="1"/>
</dbReference>
<dbReference type="NCBIfam" id="TIGR00246">
    <property type="entry name" value="tRNA_RlmH_YbeA"/>
    <property type="match status" value="1"/>
</dbReference>
<dbReference type="PANTHER" id="PTHR33603">
    <property type="entry name" value="METHYLTRANSFERASE"/>
    <property type="match status" value="1"/>
</dbReference>
<dbReference type="PANTHER" id="PTHR33603:SF1">
    <property type="entry name" value="RIBOSOMAL RNA LARGE SUBUNIT METHYLTRANSFERASE H"/>
    <property type="match status" value="1"/>
</dbReference>
<dbReference type="Pfam" id="PF02590">
    <property type="entry name" value="SPOUT_MTase"/>
    <property type="match status" value="1"/>
</dbReference>
<dbReference type="PIRSF" id="PIRSF004505">
    <property type="entry name" value="MT_bac"/>
    <property type="match status" value="1"/>
</dbReference>
<dbReference type="SUPFAM" id="SSF75217">
    <property type="entry name" value="alpha/beta knot"/>
    <property type="match status" value="1"/>
</dbReference>
<sequence>MKLQLVAVGTKMPDWVQTGFTEYLRRFPKDMPFELIEIPAGKRGKNADIKRILDKEGEQMLAAAGKNRIVTLDIPGKPWDTPQLAAELERWKLDGRDVSLLIGGPEGLSPACKAAAEQSWSLSALTLPHPLVRVLVAESLYRAWSITTNHPYHRE</sequence>
<reference key="1">
    <citation type="journal article" date="2006" name="Proc. Natl. Acad. Sci. U.S.A.">
        <title>Identification of genes subject to positive selection in uropathogenic strains of Escherichia coli: a comparative genomics approach.</title>
        <authorList>
            <person name="Chen S.L."/>
            <person name="Hung C.-S."/>
            <person name="Xu J."/>
            <person name="Reigstad C.S."/>
            <person name="Magrini V."/>
            <person name="Sabo A."/>
            <person name="Blasiar D."/>
            <person name="Bieri T."/>
            <person name="Meyer R.R."/>
            <person name="Ozersky P."/>
            <person name="Armstrong J.R."/>
            <person name="Fulton R.S."/>
            <person name="Latreille J.P."/>
            <person name="Spieth J."/>
            <person name="Hooton T.M."/>
            <person name="Mardis E.R."/>
            <person name="Hultgren S.J."/>
            <person name="Gordon J.I."/>
        </authorList>
    </citation>
    <scope>NUCLEOTIDE SEQUENCE [LARGE SCALE GENOMIC DNA]</scope>
    <source>
        <strain>UTI89 / UPEC</strain>
    </source>
</reference>
<comment type="function">
    <text evidence="1">Specifically methylates the pseudouridine at position 1915 (m3Psi1915) in 23S rRNA.</text>
</comment>
<comment type="catalytic activity">
    <reaction evidence="1">
        <text>pseudouridine(1915) in 23S rRNA + S-adenosyl-L-methionine = N(3)-methylpseudouridine(1915) in 23S rRNA + S-adenosyl-L-homocysteine + H(+)</text>
        <dbReference type="Rhea" id="RHEA:42752"/>
        <dbReference type="Rhea" id="RHEA-COMP:10221"/>
        <dbReference type="Rhea" id="RHEA-COMP:10222"/>
        <dbReference type="ChEBI" id="CHEBI:15378"/>
        <dbReference type="ChEBI" id="CHEBI:57856"/>
        <dbReference type="ChEBI" id="CHEBI:59789"/>
        <dbReference type="ChEBI" id="CHEBI:65314"/>
        <dbReference type="ChEBI" id="CHEBI:74486"/>
        <dbReference type="EC" id="2.1.1.177"/>
    </reaction>
</comment>
<comment type="subunit">
    <text evidence="1">Homodimer.</text>
</comment>
<comment type="subcellular location">
    <subcellularLocation>
        <location evidence="1">Cytoplasm</location>
    </subcellularLocation>
</comment>
<comment type="similarity">
    <text evidence="1">Belongs to the RNA methyltransferase RlmH family.</text>
</comment>
<protein>
    <recommendedName>
        <fullName evidence="1">Ribosomal RNA large subunit methyltransferase H</fullName>
        <ecNumber evidence="1">2.1.1.177</ecNumber>
    </recommendedName>
    <alternativeName>
        <fullName evidence="1">23S rRNA (pseudouridine1915-N3)-methyltransferase</fullName>
    </alternativeName>
    <alternativeName>
        <fullName evidence="1">23S rRNA m3Psi1915 methyltransferase</fullName>
    </alternativeName>
    <alternativeName>
        <fullName evidence="1">rRNA (pseudouridine-N3-)-methyltransferase RlmH</fullName>
    </alternativeName>
</protein>
<proteinExistence type="inferred from homology"/>
<gene>
    <name evidence="1" type="primary">rlmH</name>
    <name type="ordered locus">UTI89_C0638</name>
</gene>
<keyword id="KW-0963">Cytoplasm</keyword>
<keyword id="KW-0489">Methyltransferase</keyword>
<keyword id="KW-0698">rRNA processing</keyword>
<keyword id="KW-0949">S-adenosyl-L-methionine</keyword>
<keyword id="KW-0808">Transferase</keyword>
<name>RLMH_ECOUT</name>
<organism>
    <name type="scientific">Escherichia coli (strain UTI89 / UPEC)</name>
    <dbReference type="NCBI Taxonomy" id="364106"/>
    <lineage>
        <taxon>Bacteria</taxon>
        <taxon>Pseudomonadati</taxon>
        <taxon>Pseudomonadota</taxon>
        <taxon>Gammaproteobacteria</taxon>
        <taxon>Enterobacterales</taxon>
        <taxon>Enterobacteriaceae</taxon>
        <taxon>Escherichia</taxon>
    </lineage>
</organism>
<evidence type="ECO:0000255" key="1">
    <source>
        <dbReference type="HAMAP-Rule" id="MF_00658"/>
    </source>
</evidence>
<accession>Q1RES6</accession>
<feature type="chain" id="PRO_0000260554" description="Ribosomal RNA large subunit methyltransferase H">
    <location>
        <begin position="1"/>
        <end position="155"/>
    </location>
</feature>
<feature type="binding site" evidence="1">
    <location>
        <position position="72"/>
    </location>
    <ligand>
        <name>S-adenosyl-L-methionine</name>
        <dbReference type="ChEBI" id="CHEBI:59789"/>
    </ligand>
</feature>
<feature type="binding site" evidence="1">
    <location>
        <position position="103"/>
    </location>
    <ligand>
        <name>S-adenosyl-L-methionine</name>
        <dbReference type="ChEBI" id="CHEBI:59789"/>
    </ligand>
</feature>
<feature type="binding site" evidence="1">
    <location>
        <begin position="122"/>
        <end position="127"/>
    </location>
    <ligand>
        <name>S-adenosyl-L-methionine</name>
        <dbReference type="ChEBI" id="CHEBI:59789"/>
    </ligand>
</feature>